<comment type="function">
    <text evidence="1 2">May play a role in the development of the nervous system such as in neurite outgrowth and elongation. May be involved in motor axon growth and guidance.</text>
</comment>
<comment type="subunit">
    <text evidence="2">Interacts with RABGGTB.</text>
</comment>
<comment type="interaction">
    <interactant intactId="EBI-17447707">
        <id>Q9H9P2</id>
    </interactant>
    <interactant intactId="EBI-707714">
        <id>Q92843</id>
        <label>BCL2L2</label>
    </interactant>
    <organismsDiffer>false</organismsDiffer>
    <experiments>3</experiments>
</comment>
<comment type="interaction">
    <interactant intactId="EBI-17447707">
        <id>Q9H9P2</id>
    </interactant>
    <interactant intactId="EBI-752094">
        <id>Q12982</id>
        <label>BNIP2</label>
    </interactant>
    <organismsDiffer>false</organismsDiffer>
    <experiments>3</experiments>
</comment>
<comment type="interaction">
    <interactant intactId="EBI-17447707">
        <id>Q9H9P2</id>
    </interactant>
    <interactant intactId="EBI-12822627">
        <id>O14523</id>
        <label>C2CD2L</label>
    </interactant>
    <organismsDiffer>false</organismsDiffer>
    <experiments>3</experiments>
</comment>
<comment type="interaction">
    <interactant intactId="EBI-17447707">
        <id>Q9H9P2</id>
    </interactant>
    <interactant intactId="EBI-3911467">
        <id>Q07325</id>
        <label>CXCL9</label>
    </interactant>
    <organismsDiffer>false</organismsDiffer>
    <experiments>3</experiments>
</comment>
<comment type="interaction">
    <interactant intactId="EBI-17447707">
        <id>Q9H9P2</id>
    </interactant>
    <interactant intactId="EBI-8645574">
        <id>Q9UPQ8</id>
        <label>DOLK</label>
    </interactant>
    <organismsDiffer>false</organismsDiffer>
    <experiments>3</experiments>
</comment>
<comment type="interaction">
    <interactant intactId="EBI-17447707">
        <id>Q9H9P2</id>
    </interactant>
    <interactant intactId="EBI-3915253">
        <id>Q15125</id>
        <label>EBP</label>
    </interactant>
    <organismsDiffer>false</organismsDiffer>
    <experiments>3</experiments>
</comment>
<comment type="interaction">
    <interactant intactId="EBI-17447707">
        <id>Q9H9P2</id>
    </interactant>
    <interactant intactId="EBI-720480">
        <id>P24593</id>
        <label>IGFBP5</label>
    </interactant>
    <organismsDiffer>false</organismsDiffer>
    <experiments>3</experiments>
</comment>
<comment type="interaction">
    <interactant intactId="EBI-17447707">
        <id>Q9H9P2</id>
    </interactant>
    <interactant intactId="EBI-10317425">
        <id>Q9NZG7</id>
        <label>NINJ2</label>
    </interactant>
    <organismsDiffer>false</organismsDiffer>
    <experiments>3</experiments>
</comment>
<comment type="interaction">
    <interactant intactId="EBI-17447707">
        <id>Q9H9P2</id>
    </interactant>
    <interactant intactId="EBI-12825395">
        <id>O95968</id>
        <label>SCGB1D1</label>
    </interactant>
    <organismsDiffer>false</organismsDiffer>
    <experiments>3</experiments>
</comment>
<comment type="interaction">
    <interactant intactId="EBI-17447707">
        <id>Q9H9P2</id>
    </interactant>
    <interactant intactId="EBI-2849773">
        <id>Q8IVQ6</id>
        <label>ZDHHC21</label>
    </interactant>
    <organismsDiffer>false</organismsDiffer>
    <experiments>3</experiments>
</comment>
<comment type="subcellular location">
    <subcellularLocation>
        <location evidence="9">Cytoplasm</location>
    </subcellularLocation>
    <subcellularLocation>
        <location evidence="12">Membrane</location>
        <topology evidence="12">Single-pass type I membrane protein</topology>
    </subcellularLocation>
</comment>
<comment type="subcellular location">
    <molecule>Isoform 2</molecule>
    <subcellularLocation>
        <location evidence="8">Endoplasmic reticulum</location>
    </subcellularLocation>
    <subcellularLocation>
        <location evidence="12">Endoplasmic reticulum membrane</location>
        <topology evidence="12">Single-pass type I membrane protein</topology>
    </subcellularLocation>
</comment>
<comment type="subcellular location">
    <molecule>Isoform 3</molecule>
    <subcellularLocation>
        <location evidence="8">Cytoplasm</location>
    </subcellularLocation>
</comment>
<comment type="alternative products">
    <event type="alternative promoter"/>
    <event type="alternative splicing"/>
    <isoform>
        <id>Q9H9P2-1</id>
        <name>1</name>
        <sequence type="displayed"/>
    </isoform>
    <isoform>
        <id>Q9H9P2-2</id>
        <name>2</name>
        <name>CHODLF</name>
        <sequence type="described" ref="VSP_017275"/>
    </isoform>
    <isoform>
        <id>Q9H9P2-3</id>
        <name>3</name>
        <name>CHODLFdeltaE</name>
        <sequence type="described" ref="VSP_017275 VSP_017276"/>
    </isoform>
    <isoform>
        <id>Q9H9P2-4</id>
        <name>4</name>
        <sequence type="described" ref="VSP_043300"/>
    </isoform>
</comment>
<comment type="tissue specificity">
    <text evidence="6 7 8">Found in spleen, testis, prostate and fetal liver. Expression limited to vascular muscle of testis, smooth muscle of prostate stroma, heart muscle, skeletal muscle, crypts of small intestine, and red pulp of spleen. B lymphocytes express isoform 2 only; peripheral blood T lymphocytes express isoform 3 only; granulocytes and monocytes express neither isoform 2 nor isoform 3. During development of T lymphocytes, bone marrow progenitor cells express isoform 2 only; thymocytes at different stages of maturation express predominantly isoform 2 and weakly isoform 3, and mature thymocytes express only isoform 2.</text>
</comment>
<comment type="PTM">
    <text>N-glycosylated.</text>
</comment>
<comment type="miscellaneous">
    <text evidence="13">A protein of the expected size has been detected by antibody binding and Western blot in at least one of the analyzed tissues or cells.</text>
</comment>
<comment type="miscellaneous">
    <molecule>Isoform 1</molecule>
    <text>Produced by alternative promoter usage.</text>
</comment>
<comment type="miscellaneous">
    <molecule>Isoform 2</molecule>
    <text evidence="12">Produced by alternative promoter usage.</text>
</comment>
<comment type="miscellaneous">
    <molecule>Isoform 3</molecule>
    <text evidence="12">Produced by alternative splicing of isoform 2.</text>
</comment>
<comment type="miscellaneous">
    <molecule>Isoform 4</molecule>
    <text evidence="12">Produced by alternative splicing of isoform 1.</text>
</comment>
<comment type="online information" name="Functional Glycomics Gateway - Glycan Binding">
    <link uri="http://www.functionalglycomics.org/glycomics/GBPServlet?&amp;operationType=view&amp;cbpId=cbp_hum_Ctlect_185"/>
    <text>Chondrolectin</text>
</comment>
<name>CHODL_HUMAN</name>
<accession>Q9H9P2</accession>
<accession>B2R9C0</accession>
<accession>B4DJB8</accession>
<accession>Q7Z798</accession>
<accession>Q7Z799</accession>
<accession>Q7Z7A0</accession>
<accession>Q9HCY3</accession>
<organism>
    <name type="scientific">Homo sapiens</name>
    <name type="common">Human</name>
    <dbReference type="NCBI Taxonomy" id="9606"/>
    <lineage>
        <taxon>Eukaryota</taxon>
        <taxon>Metazoa</taxon>
        <taxon>Chordata</taxon>
        <taxon>Craniata</taxon>
        <taxon>Vertebrata</taxon>
        <taxon>Euteleostomi</taxon>
        <taxon>Mammalia</taxon>
        <taxon>Eutheria</taxon>
        <taxon>Euarchontoglires</taxon>
        <taxon>Primates</taxon>
        <taxon>Haplorrhini</taxon>
        <taxon>Catarrhini</taxon>
        <taxon>Hominidae</taxon>
        <taxon>Homo</taxon>
    </lineage>
</organism>
<keyword id="KW-0877">Alternative promoter usage</keyword>
<keyword id="KW-0025">Alternative splicing</keyword>
<keyword id="KW-0963">Cytoplasm</keyword>
<keyword id="KW-1015">Disulfide bond</keyword>
<keyword id="KW-0256">Endoplasmic reticulum</keyword>
<keyword id="KW-0325">Glycoprotein</keyword>
<keyword id="KW-0430">Lectin</keyword>
<keyword id="KW-0472">Membrane</keyword>
<keyword id="KW-0524">Neurogenesis</keyword>
<keyword id="KW-1267">Proteomics identification</keyword>
<keyword id="KW-1185">Reference proteome</keyword>
<keyword id="KW-0732">Signal</keyword>
<keyword id="KW-0812">Transmembrane</keyword>
<keyword id="KW-1133">Transmembrane helix</keyword>
<evidence type="ECO:0000250" key="1">
    <source>
        <dbReference type="UniProtKB" id="Q568T5"/>
    </source>
</evidence>
<evidence type="ECO:0000250" key="2">
    <source>
        <dbReference type="UniProtKB" id="Q9CXM0"/>
    </source>
</evidence>
<evidence type="ECO:0000255" key="3"/>
<evidence type="ECO:0000255" key="4">
    <source>
        <dbReference type="PROSITE-ProRule" id="PRU00040"/>
    </source>
</evidence>
<evidence type="ECO:0000256" key="5">
    <source>
        <dbReference type="SAM" id="MobiDB-lite"/>
    </source>
</evidence>
<evidence type="ECO:0000269" key="6">
    <source>
    </source>
</evidence>
<evidence type="ECO:0000269" key="7">
    <source>
    </source>
</evidence>
<evidence type="ECO:0000269" key="8">
    <source>
    </source>
</evidence>
<evidence type="ECO:0000269" key="9">
    <source>
    </source>
</evidence>
<evidence type="ECO:0000303" key="10">
    <source>
    </source>
</evidence>
<evidence type="ECO:0000303" key="11">
    <source>
    </source>
</evidence>
<evidence type="ECO:0000305" key="12"/>
<evidence type="ECO:0000305" key="13">
    <source>
    </source>
</evidence>
<protein>
    <recommendedName>
        <fullName>Chondrolectin</fullName>
    </recommendedName>
    <alternativeName>
        <fullName>Transmembrane protein MT75</fullName>
    </alternativeName>
</protein>
<proteinExistence type="evidence at protein level"/>
<sequence>MSRVVSLLLGAALLCGHGAFCRRVVSGQKVCFADFKHPCYKMAYFHELSSRVSFQEARLACESEGGVLLSLENEAEQKLIESMLQNLTKPGTGISDGDFWIGLWRNGDGQTSGACPDLYQWSDGSNSQYRNWYTDEPSCGSEKCVVMYHQPTANPGLGGPYLYQWNDDRCNMKHNYICKYEPEINPTAPVEKPYLTNQPGDTHQNVVVTEAGIIPNLIYVVIPTIPLLLLILVAFGTCCFQMLHKSKGRTKTSPNQSTLWISKSTRKESGMEV</sequence>
<gene>
    <name type="primary">CHODL</name>
    <name type="synonym">C21orf68</name>
    <name type="ORF">PRED12</name>
    <name type="ORF">UNQ872/PRO1890</name>
</gene>
<reference key="1">
    <citation type="journal article" date="2002" name="Genomics">
        <title>Molecular cloning and characterization of human chondrolectin, a novel type I transmembrane protein homologous to C-type lectins.</title>
        <authorList>
            <person name="Weng L."/>
            <person name="Smits P."/>
            <person name="Wauters J."/>
            <person name="Merregaert J."/>
        </authorList>
    </citation>
    <scope>NUCLEOTIDE SEQUENCE [MRNA] (ISOFORM 1)</scope>
    <scope>TISSUE SPECIFICITY</scope>
</reference>
<reference key="2">
    <citation type="journal article" date="2003" name="J. Biol. Chem.">
        <title>A novel alternative spliced chondrolectin isoform lacking the transmembrane domain is expressed during T cell maturation.</title>
        <authorList>
            <person name="Weng L."/>
            <person name="Van Bockstaele D.R."/>
            <person name="Wauters J."/>
            <person name="Van Marck E."/>
            <person name="Plum J."/>
            <person name="Berneman Z.N."/>
            <person name="Merregaert J."/>
        </authorList>
    </citation>
    <scope>NUCLEOTIDE SEQUENCE [MRNA] (ISOFORMS 2 AND 3)</scope>
    <scope>ALTERNATIVE PROMOTER USAGE</scope>
    <scope>SUBCELLULAR LOCATION (ISOFORMS 2 AND 3)</scope>
</reference>
<reference key="3">
    <citation type="journal article" date="2003" name="Genome Res.">
        <title>The secreted protein discovery initiative (SPDI), a large-scale effort to identify novel human secreted and transmembrane proteins: a bioinformatics assessment.</title>
        <authorList>
            <person name="Clark H.F."/>
            <person name="Gurney A.L."/>
            <person name="Abaya E."/>
            <person name="Baker K."/>
            <person name="Baldwin D.T."/>
            <person name="Brush J."/>
            <person name="Chen J."/>
            <person name="Chow B."/>
            <person name="Chui C."/>
            <person name="Crowley C."/>
            <person name="Currell B."/>
            <person name="Deuel B."/>
            <person name="Dowd P."/>
            <person name="Eaton D."/>
            <person name="Foster J.S."/>
            <person name="Grimaldi C."/>
            <person name="Gu Q."/>
            <person name="Hass P.E."/>
            <person name="Heldens S."/>
            <person name="Huang A."/>
            <person name="Kim H.S."/>
            <person name="Klimowski L."/>
            <person name="Jin Y."/>
            <person name="Johnson S."/>
            <person name="Lee J."/>
            <person name="Lewis L."/>
            <person name="Liao D."/>
            <person name="Mark M.R."/>
            <person name="Robbie E."/>
            <person name="Sanchez C."/>
            <person name="Schoenfeld J."/>
            <person name="Seshagiri S."/>
            <person name="Simmons L."/>
            <person name="Singh J."/>
            <person name="Smith V."/>
            <person name="Stinson J."/>
            <person name="Vagts A."/>
            <person name="Vandlen R.L."/>
            <person name="Watanabe C."/>
            <person name="Wieand D."/>
            <person name="Woods K."/>
            <person name="Xie M.-H."/>
            <person name="Yansura D.G."/>
            <person name="Yi S."/>
            <person name="Yu G."/>
            <person name="Yuan J."/>
            <person name="Zhang M."/>
            <person name="Zhang Z."/>
            <person name="Goddard A.D."/>
            <person name="Wood W.I."/>
            <person name="Godowski P.J."/>
            <person name="Gray A.M."/>
        </authorList>
    </citation>
    <scope>NUCLEOTIDE SEQUENCE [LARGE SCALE MRNA] (ISOFORM 1)</scope>
</reference>
<reference key="4">
    <citation type="journal article" date="2004" name="Nat. Genet.">
        <title>Complete sequencing and characterization of 21,243 full-length human cDNAs.</title>
        <authorList>
            <person name="Ota T."/>
            <person name="Suzuki Y."/>
            <person name="Nishikawa T."/>
            <person name="Otsuki T."/>
            <person name="Sugiyama T."/>
            <person name="Irie R."/>
            <person name="Wakamatsu A."/>
            <person name="Hayashi K."/>
            <person name="Sato H."/>
            <person name="Nagai K."/>
            <person name="Kimura K."/>
            <person name="Makita H."/>
            <person name="Sekine M."/>
            <person name="Obayashi M."/>
            <person name="Nishi T."/>
            <person name="Shibahara T."/>
            <person name="Tanaka T."/>
            <person name="Ishii S."/>
            <person name="Yamamoto J."/>
            <person name="Saito K."/>
            <person name="Kawai Y."/>
            <person name="Isono Y."/>
            <person name="Nakamura Y."/>
            <person name="Nagahari K."/>
            <person name="Murakami K."/>
            <person name="Yasuda T."/>
            <person name="Iwayanagi T."/>
            <person name="Wagatsuma M."/>
            <person name="Shiratori A."/>
            <person name="Sudo H."/>
            <person name="Hosoiri T."/>
            <person name="Kaku Y."/>
            <person name="Kodaira H."/>
            <person name="Kondo H."/>
            <person name="Sugawara M."/>
            <person name="Takahashi M."/>
            <person name="Kanda K."/>
            <person name="Yokoi T."/>
            <person name="Furuya T."/>
            <person name="Kikkawa E."/>
            <person name="Omura Y."/>
            <person name="Abe K."/>
            <person name="Kamihara K."/>
            <person name="Katsuta N."/>
            <person name="Sato K."/>
            <person name="Tanikawa M."/>
            <person name="Yamazaki M."/>
            <person name="Ninomiya K."/>
            <person name="Ishibashi T."/>
            <person name="Yamashita H."/>
            <person name="Murakawa K."/>
            <person name="Fujimori K."/>
            <person name="Tanai H."/>
            <person name="Kimata M."/>
            <person name="Watanabe M."/>
            <person name="Hiraoka S."/>
            <person name="Chiba Y."/>
            <person name="Ishida S."/>
            <person name="Ono Y."/>
            <person name="Takiguchi S."/>
            <person name="Watanabe S."/>
            <person name="Yosida M."/>
            <person name="Hotuta T."/>
            <person name="Kusano J."/>
            <person name="Kanehori K."/>
            <person name="Takahashi-Fujii A."/>
            <person name="Hara H."/>
            <person name="Tanase T.-O."/>
            <person name="Nomura Y."/>
            <person name="Togiya S."/>
            <person name="Komai F."/>
            <person name="Hara R."/>
            <person name="Takeuchi K."/>
            <person name="Arita M."/>
            <person name="Imose N."/>
            <person name="Musashino K."/>
            <person name="Yuuki H."/>
            <person name="Oshima A."/>
            <person name="Sasaki N."/>
            <person name="Aotsuka S."/>
            <person name="Yoshikawa Y."/>
            <person name="Matsunawa H."/>
            <person name="Ichihara T."/>
            <person name="Shiohata N."/>
            <person name="Sano S."/>
            <person name="Moriya S."/>
            <person name="Momiyama H."/>
            <person name="Satoh N."/>
            <person name="Takami S."/>
            <person name="Terashima Y."/>
            <person name="Suzuki O."/>
            <person name="Nakagawa S."/>
            <person name="Senoh A."/>
            <person name="Mizoguchi H."/>
            <person name="Goto Y."/>
            <person name="Shimizu F."/>
            <person name="Wakebe H."/>
            <person name="Hishigaki H."/>
            <person name="Watanabe T."/>
            <person name="Sugiyama A."/>
            <person name="Takemoto M."/>
            <person name="Kawakami B."/>
            <person name="Yamazaki M."/>
            <person name="Watanabe K."/>
            <person name="Kumagai A."/>
            <person name="Itakura S."/>
            <person name="Fukuzumi Y."/>
            <person name="Fujimori Y."/>
            <person name="Komiyama M."/>
            <person name="Tashiro H."/>
            <person name="Tanigami A."/>
            <person name="Fujiwara T."/>
            <person name="Ono T."/>
            <person name="Yamada K."/>
            <person name="Fujii Y."/>
            <person name="Ozaki K."/>
            <person name="Hirao M."/>
            <person name="Ohmori Y."/>
            <person name="Kawabata A."/>
            <person name="Hikiji T."/>
            <person name="Kobatake N."/>
            <person name="Inagaki H."/>
            <person name="Ikema Y."/>
            <person name="Okamoto S."/>
            <person name="Okitani R."/>
            <person name="Kawakami T."/>
            <person name="Noguchi S."/>
            <person name="Itoh T."/>
            <person name="Shigeta K."/>
            <person name="Senba T."/>
            <person name="Matsumura K."/>
            <person name="Nakajima Y."/>
            <person name="Mizuno T."/>
            <person name="Morinaga M."/>
            <person name="Sasaki M."/>
            <person name="Togashi T."/>
            <person name="Oyama M."/>
            <person name="Hata H."/>
            <person name="Watanabe M."/>
            <person name="Komatsu T."/>
            <person name="Mizushima-Sugano J."/>
            <person name="Satoh T."/>
            <person name="Shirai Y."/>
            <person name="Takahashi Y."/>
            <person name="Nakagawa K."/>
            <person name="Okumura K."/>
            <person name="Nagase T."/>
            <person name="Nomura N."/>
            <person name="Kikuchi H."/>
            <person name="Masuho Y."/>
            <person name="Yamashita R."/>
            <person name="Nakai K."/>
            <person name="Yada T."/>
            <person name="Nakamura Y."/>
            <person name="Ohara O."/>
            <person name="Isogai T."/>
            <person name="Sugano S."/>
        </authorList>
    </citation>
    <scope>NUCLEOTIDE SEQUENCE [LARGE SCALE MRNA] (ISOFORMS 1; 2 AND 4)</scope>
    <source>
        <tissue>Brain</tissue>
    </source>
</reference>
<reference key="5">
    <citation type="journal article" date="2000" name="Nature">
        <title>The DNA sequence of human chromosome 21.</title>
        <authorList>
            <person name="Hattori M."/>
            <person name="Fujiyama A."/>
            <person name="Taylor T.D."/>
            <person name="Watanabe H."/>
            <person name="Yada T."/>
            <person name="Park H.-S."/>
            <person name="Toyoda A."/>
            <person name="Ishii K."/>
            <person name="Totoki Y."/>
            <person name="Choi D.-K."/>
            <person name="Groner Y."/>
            <person name="Soeda E."/>
            <person name="Ohki M."/>
            <person name="Takagi T."/>
            <person name="Sakaki Y."/>
            <person name="Taudien S."/>
            <person name="Blechschmidt K."/>
            <person name="Polley A."/>
            <person name="Menzel U."/>
            <person name="Delabar J."/>
            <person name="Kumpf K."/>
            <person name="Lehmann R."/>
            <person name="Patterson D."/>
            <person name="Reichwald K."/>
            <person name="Rump A."/>
            <person name="Schillhabel M."/>
            <person name="Schudy A."/>
            <person name="Zimmermann W."/>
            <person name="Rosenthal A."/>
            <person name="Kudoh J."/>
            <person name="Shibuya K."/>
            <person name="Kawasaki K."/>
            <person name="Asakawa S."/>
            <person name="Shintani A."/>
            <person name="Sasaki T."/>
            <person name="Nagamine K."/>
            <person name="Mitsuyama S."/>
            <person name="Antonarakis S.E."/>
            <person name="Minoshima S."/>
            <person name="Shimizu N."/>
            <person name="Nordsiek G."/>
            <person name="Hornischer K."/>
            <person name="Brandt P."/>
            <person name="Scharfe M."/>
            <person name="Schoen O."/>
            <person name="Desario A."/>
            <person name="Reichelt J."/>
            <person name="Kauer G."/>
            <person name="Bloecker H."/>
            <person name="Ramser J."/>
            <person name="Beck A."/>
            <person name="Klages S."/>
            <person name="Hennig S."/>
            <person name="Riesselmann L."/>
            <person name="Dagand E."/>
            <person name="Wehrmeyer S."/>
            <person name="Borzym K."/>
            <person name="Gardiner K."/>
            <person name="Nizetic D."/>
            <person name="Francis F."/>
            <person name="Lehrach H."/>
            <person name="Reinhardt R."/>
            <person name="Yaspo M.-L."/>
        </authorList>
    </citation>
    <scope>NUCLEOTIDE SEQUENCE [LARGE SCALE GENOMIC DNA]</scope>
</reference>
<reference key="6">
    <citation type="submission" date="2005-09" db="EMBL/GenBank/DDBJ databases">
        <authorList>
            <person name="Mural R.J."/>
            <person name="Istrail S."/>
            <person name="Sutton G.G."/>
            <person name="Florea L."/>
            <person name="Halpern A.L."/>
            <person name="Mobarry C.M."/>
            <person name="Lippert R."/>
            <person name="Walenz B."/>
            <person name="Shatkay H."/>
            <person name="Dew I."/>
            <person name="Miller J.R."/>
            <person name="Flanigan M.J."/>
            <person name="Edwards N.J."/>
            <person name="Bolanos R."/>
            <person name="Fasulo D."/>
            <person name="Halldorsson B.V."/>
            <person name="Hannenhalli S."/>
            <person name="Turner R."/>
            <person name="Yooseph S."/>
            <person name="Lu F."/>
            <person name="Nusskern D.R."/>
            <person name="Shue B.C."/>
            <person name="Zheng X.H."/>
            <person name="Zhong F."/>
            <person name="Delcher A.L."/>
            <person name="Huson D.H."/>
            <person name="Kravitz S.A."/>
            <person name="Mouchard L."/>
            <person name="Reinert K."/>
            <person name="Remington K.A."/>
            <person name="Clark A.G."/>
            <person name="Waterman M.S."/>
            <person name="Eichler E.E."/>
            <person name="Adams M.D."/>
            <person name="Hunkapiller M.W."/>
            <person name="Myers E.W."/>
            <person name="Venter J.C."/>
        </authorList>
    </citation>
    <scope>NUCLEOTIDE SEQUENCE [LARGE SCALE GENOMIC DNA]</scope>
</reference>
<reference key="7">
    <citation type="journal article" date="2004" name="Genome Res.">
        <title>The status, quality, and expansion of the NIH full-length cDNA project: the Mammalian Gene Collection (MGC).</title>
        <authorList>
            <consortium name="The MGC Project Team"/>
        </authorList>
    </citation>
    <scope>NUCLEOTIDE SEQUENCE [LARGE SCALE MRNA] (ISOFORM 1)</scope>
    <source>
        <tissue>Brain</tissue>
    </source>
</reference>
<reference key="8">
    <citation type="journal article" date="2001" name="Genomics">
        <title>From PREDs and open reading frames to cDNA isolation: revisiting the human chromosome 21 transcription map.</title>
        <authorList>
            <person name="Reymond A."/>
            <person name="Friedli M."/>
            <person name="Neergaard Henrichsen C."/>
            <person name="Chapot F."/>
            <person name="Deutsch S."/>
            <person name="Ucla C."/>
            <person name="Rossier C."/>
            <person name="Lyle R."/>
            <person name="Guipponi M."/>
            <person name="Antonarakis S.E."/>
        </authorList>
    </citation>
    <scope>TISSUE SPECIFICITY</scope>
</reference>
<reference key="9">
    <citation type="journal article" date="2012" name="Mol. Cell. Proteomics">
        <title>Antibody-based protein profiling of the human chromosome 21.</title>
        <authorList>
            <person name="Uhlen M."/>
            <person name="Oksvold P."/>
            <person name="Algenas C."/>
            <person name="Hamsten C."/>
            <person name="Fagerberg L."/>
            <person name="Klevebring D."/>
            <person name="Lundberg E."/>
            <person name="Odeberg J."/>
            <person name="Ponten F."/>
            <person name="Kondo T."/>
            <person name="Sivertsson A."/>
        </authorList>
    </citation>
    <scope>SUBCELLULAR LOCATION</scope>
    <scope>MISCELLANEOUS</scope>
</reference>
<feature type="signal peptide" evidence="3">
    <location>
        <begin position="1"/>
        <end position="21"/>
    </location>
</feature>
<feature type="chain" id="PRO_0000017415" description="Chondrolectin">
    <location>
        <begin position="22"/>
        <end position="273"/>
    </location>
</feature>
<feature type="topological domain" description="Extracellular" evidence="3">
    <location>
        <begin position="22"/>
        <end position="216"/>
    </location>
</feature>
<feature type="transmembrane region" description="Helical" evidence="3">
    <location>
        <begin position="217"/>
        <end position="237"/>
    </location>
</feature>
<feature type="topological domain" description="Cytoplasmic" evidence="3">
    <location>
        <begin position="238"/>
        <end position="273"/>
    </location>
</feature>
<feature type="domain" description="C-type lectin" evidence="4">
    <location>
        <begin position="35"/>
        <end position="179"/>
    </location>
</feature>
<feature type="region of interest" description="Disordered" evidence="5">
    <location>
        <begin position="248"/>
        <end position="273"/>
    </location>
</feature>
<feature type="compositionally biased region" description="Polar residues" evidence="5">
    <location>
        <begin position="251"/>
        <end position="263"/>
    </location>
</feature>
<feature type="glycosylation site" description="N-linked (GlcNAc...) asparagine" evidence="3">
    <location>
        <position position="86"/>
    </location>
</feature>
<feature type="disulfide bond" evidence="4">
    <location>
        <begin position="61"/>
        <end position="178"/>
    </location>
</feature>
<feature type="disulfide bond" evidence="4">
    <location>
        <begin position="144"/>
        <end position="170"/>
    </location>
</feature>
<feature type="splice variant" id="VSP_017275" description="In isoform 2 and isoform 3." evidence="10 11">
    <location>
        <begin position="1"/>
        <end position="41"/>
    </location>
</feature>
<feature type="splice variant" id="VSP_043300" description="In isoform 4." evidence="11">
    <original>MSRVVSLLLGAALLCGHGAFCRRVVSG</original>
    <variation>MTAGSAHS</variation>
    <location>
        <begin position="1"/>
        <end position="27"/>
    </location>
</feature>
<feature type="splice variant" id="VSP_017276" description="In isoform 3." evidence="10">
    <original>GIIPNLIYVVIPTIPLLLLILVAFGTCCFQMLHKSKGRTKTSPNQSTLWISKSTRKESGMEV</original>
    <variation>VKEEQKLVQTSLHCGFQRVPEKKAAWKYNNSLTWFQNFVILDLYKEWHQNNSLEWLEITKDLQDEL</variation>
    <location>
        <begin position="212"/>
        <end position="273"/>
    </location>
</feature>
<feature type="sequence conflict" description="In Ref. 2; AAP43902." evidence="12" ref="2">
    <original>E</original>
    <variation>G</variation>
    <location>
        <position position="56"/>
    </location>
</feature>
<feature type="sequence conflict" description="In Ref. 2; AAP43902." evidence="12" ref="2">
    <original>G</original>
    <variation>S</variation>
    <location>
        <position position="159"/>
    </location>
</feature>
<dbReference type="EMBL" id="AF257472">
    <property type="protein sequence ID" value="AAL05981.1"/>
    <property type="molecule type" value="mRNA"/>
</dbReference>
<dbReference type="EMBL" id="AF523313">
    <property type="protein sequence ID" value="AAP43902.1"/>
    <property type="molecule type" value="mRNA"/>
</dbReference>
<dbReference type="EMBL" id="AF523314">
    <property type="protein sequence ID" value="AAP43903.1"/>
    <property type="molecule type" value="mRNA"/>
</dbReference>
<dbReference type="EMBL" id="AF523315">
    <property type="protein sequence ID" value="AAP43904.1"/>
    <property type="molecule type" value="mRNA"/>
</dbReference>
<dbReference type="EMBL" id="AY358608">
    <property type="protein sequence ID" value="AAQ88971.1"/>
    <property type="molecule type" value="mRNA"/>
</dbReference>
<dbReference type="EMBL" id="AK022689">
    <property type="protein sequence ID" value="BAB14181.1"/>
    <property type="molecule type" value="mRNA"/>
</dbReference>
<dbReference type="EMBL" id="AK296009">
    <property type="protein sequence ID" value="BAG58780.1"/>
    <property type="molecule type" value="mRNA"/>
</dbReference>
<dbReference type="EMBL" id="AK313725">
    <property type="protein sequence ID" value="BAG36467.1"/>
    <property type="molecule type" value="mRNA"/>
</dbReference>
<dbReference type="EMBL" id="AF130417">
    <property type="status" value="NOT_ANNOTATED_CDS"/>
    <property type="molecule type" value="Genomic_DNA"/>
</dbReference>
<dbReference type="EMBL" id="AL078474">
    <property type="status" value="NOT_ANNOTATED_CDS"/>
    <property type="molecule type" value="Genomic_DNA"/>
</dbReference>
<dbReference type="EMBL" id="AL109761">
    <property type="status" value="NOT_ANNOTATED_CDS"/>
    <property type="molecule type" value="Genomic_DNA"/>
</dbReference>
<dbReference type="EMBL" id="AL163217">
    <property type="protein sequence ID" value="CAB90388.1"/>
    <property type="molecule type" value="Genomic_DNA"/>
</dbReference>
<dbReference type="EMBL" id="AP000404">
    <property type="status" value="NOT_ANNOTATED_CDS"/>
    <property type="molecule type" value="Genomic_DNA"/>
</dbReference>
<dbReference type="EMBL" id="AP000656">
    <property type="status" value="NOT_ANNOTATED_CDS"/>
    <property type="molecule type" value="Genomic_DNA"/>
</dbReference>
<dbReference type="EMBL" id="AP000745">
    <property type="status" value="NOT_ANNOTATED_CDS"/>
    <property type="molecule type" value="Genomic_DNA"/>
</dbReference>
<dbReference type="EMBL" id="AP000998">
    <property type="status" value="NOT_ANNOTATED_CDS"/>
    <property type="molecule type" value="Genomic_DNA"/>
</dbReference>
<dbReference type="EMBL" id="CH471079">
    <property type="protein sequence ID" value="EAX10018.1"/>
    <property type="molecule type" value="Genomic_DNA"/>
</dbReference>
<dbReference type="EMBL" id="BC009418">
    <property type="protein sequence ID" value="AAH09418.1"/>
    <property type="molecule type" value="mRNA"/>
</dbReference>
<dbReference type="CCDS" id="CCDS13570.1">
    <molecule id="Q9H9P2-1"/>
</dbReference>
<dbReference type="CCDS" id="CCDS56208.1">
    <molecule id="Q9H9P2-4"/>
</dbReference>
<dbReference type="CCDS" id="CCDS56209.1">
    <molecule id="Q9H9P2-2"/>
</dbReference>
<dbReference type="CCDS" id="CCDS56210.1">
    <molecule id="Q9H9P2-3"/>
</dbReference>
<dbReference type="RefSeq" id="NP_001191103.1">
    <molecule id="Q9H9P2-4"/>
    <property type="nucleotide sequence ID" value="NM_001204174.2"/>
</dbReference>
<dbReference type="RefSeq" id="NP_001191104.1">
    <molecule id="Q9H9P2-2"/>
    <property type="nucleotide sequence ID" value="NM_001204175.2"/>
</dbReference>
<dbReference type="RefSeq" id="NP_001191105.1">
    <molecule id="Q9H9P2-2"/>
    <property type="nucleotide sequence ID" value="NM_001204176.2"/>
</dbReference>
<dbReference type="RefSeq" id="NP_001191106.1">
    <property type="nucleotide sequence ID" value="NM_001204177.1"/>
</dbReference>
<dbReference type="RefSeq" id="NP_001191107.1">
    <property type="nucleotide sequence ID" value="NM_001204178.1"/>
</dbReference>
<dbReference type="RefSeq" id="NP_079220.2">
    <molecule id="Q9H9P2-1"/>
    <property type="nucleotide sequence ID" value="NM_024944.2"/>
</dbReference>
<dbReference type="RefSeq" id="XP_011527759.1">
    <property type="nucleotide sequence ID" value="XM_011529457.2"/>
</dbReference>
<dbReference type="SMR" id="Q9H9P2"/>
<dbReference type="BioGRID" id="126628">
    <property type="interactions" value="33"/>
</dbReference>
<dbReference type="FunCoup" id="Q9H9P2">
    <property type="interactions" value="328"/>
</dbReference>
<dbReference type="IntAct" id="Q9H9P2">
    <property type="interactions" value="32"/>
</dbReference>
<dbReference type="STRING" id="9606.ENSP00000299295"/>
<dbReference type="GlyCosmos" id="Q9H9P2">
    <property type="glycosylation" value="1 site, No reported glycans"/>
</dbReference>
<dbReference type="GlyGen" id="Q9H9P2">
    <property type="glycosylation" value="1 site"/>
</dbReference>
<dbReference type="iPTMnet" id="Q9H9P2"/>
<dbReference type="PhosphoSitePlus" id="Q9H9P2"/>
<dbReference type="SwissPalm" id="Q9H9P2"/>
<dbReference type="BioMuta" id="CHODL"/>
<dbReference type="DMDM" id="18202949"/>
<dbReference type="MassIVE" id="Q9H9P2"/>
<dbReference type="PaxDb" id="9606-ENSP00000299295"/>
<dbReference type="PeptideAtlas" id="Q9H9P2"/>
<dbReference type="ProteomicsDB" id="81335">
    <molecule id="Q9H9P2-1"/>
</dbReference>
<dbReference type="ProteomicsDB" id="81336">
    <molecule id="Q9H9P2-2"/>
</dbReference>
<dbReference type="ProteomicsDB" id="81337">
    <molecule id="Q9H9P2-3"/>
</dbReference>
<dbReference type="ProteomicsDB" id="81338">
    <molecule id="Q9H9P2-4"/>
</dbReference>
<dbReference type="Antibodypedia" id="2518">
    <property type="antibodies" value="133 antibodies from 25 providers"/>
</dbReference>
<dbReference type="DNASU" id="140578"/>
<dbReference type="Ensembl" id="ENST00000299295.7">
    <molecule id="Q9H9P2-1"/>
    <property type="protein sequence ID" value="ENSP00000299295.2"/>
    <property type="gene ID" value="ENSG00000154645.14"/>
</dbReference>
<dbReference type="Ensembl" id="ENST00000400127.5">
    <molecule id="Q9H9P2-2"/>
    <property type="protein sequence ID" value="ENSP00000382992.1"/>
    <property type="gene ID" value="ENSG00000154645.14"/>
</dbReference>
<dbReference type="Ensembl" id="ENST00000400128.5">
    <molecule id="Q9H9P2-2"/>
    <property type="protein sequence ID" value="ENSP00000382993.1"/>
    <property type="gene ID" value="ENSG00000154645.14"/>
</dbReference>
<dbReference type="Ensembl" id="ENST00000543733.5">
    <molecule id="Q9H9P2-4"/>
    <property type="protein sequence ID" value="ENSP00000443566.1"/>
    <property type="gene ID" value="ENSG00000154645.14"/>
</dbReference>
<dbReference type="GeneID" id="140578"/>
<dbReference type="KEGG" id="hsa:140578"/>
<dbReference type="MANE-Select" id="ENST00000299295.7">
    <property type="protein sequence ID" value="ENSP00000299295.2"/>
    <property type="RefSeq nucleotide sequence ID" value="NM_024944.3"/>
    <property type="RefSeq protein sequence ID" value="NP_079220.2"/>
</dbReference>
<dbReference type="UCSC" id="uc002ykr.5">
    <molecule id="Q9H9P2-1"/>
    <property type="organism name" value="human"/>
</dbReference>
<dbReference type="AGR" id="HGNC:17807"/>
<dbReference type="CTD" id="140578"/>
<dbReference type="DisGeNET" id="140578"/>
<dbReference type="GeneCards" id="CHODL"/>
<dbReference type="HGNC" id="HGNC:17807">
    <property type="gene designation" value="CHODL"/>
</dbReference>
<dbReference type="HPA" id="ENSG00000154645">
    <property type="expression patterns" value="Tissue enhanced (lymphoid tissue, testis)"/>
</dbReference>
<dbReference type="MIM" id="607247">
    <property type="type" value="gene"/>
</dbReference>
<dbReference type="neXtProt" id="NX_Q9H9P2"/>
<dbReference type="OpenTargets" id="ENSG00000154645"/>
<dbReference type="PharmGKB" id="PA26475"/>
<dbReference type="VEuPathDB" id="HostDB:ENSG00000154645"/>
<dbReference type="eggNOG" id="KOG4297">
    <property type="taxonomic scope" value="Eukaryota"/>
</dbReference>
<dbReference type="GeneTree" id="ENSGT00390000001844"/>
<dbReference type="HOGENOM" id="CLU_045492_1_0_1"/>
<dbReference type="InParanoid" id="Q9H9P2"/>
<dbReference type="OMA" id="FICKYKS"/>
<dbReference type="OrthoDB" id="5797898at2759"/>
<dbReference type="PAN-GO" id="Q9H9P2">
    <property type="GO annotations" value="2 GO annotations based on evolutionary models"/>
</dbReference>
<dbReference type="PhylomeDB" id="Q9H9P2"/>
<dbReference type="TreeFam" id="TF330715"/>
<dbReference type="PathwayCommons" id="Q9H9P2"/>
<dbReference type="SignaLink" id="Q9H9P2"/>
<dbReference type="BioGRID-ORCS" id="140578">
    <property type="hits" value="7 hits in 1137 CRISPR screens"/>
</dbReference>
<dbReference type="ChiTaRS" id="CHODL">
    <property type="organism name" value="human"/>
</dbReference>
<dbReference type="GeneWiki" id="CHODL"/>
<dbReference type="GenomeRNAi" id="140578"/>
<dbReference type="Pharos" id="Q9H9P2">
    <property type="development level" value="Tbio"/>
</dbReference>
<dbReference type="PRO" id="PR:Q9H9P2"/>
<dbReference type="Proteomes" id="UP000005640">
    <property type="component" value="Chromosome 21"/>
</dbReference>
<dbReference type="RNAct" id="Q9H9P2">
    <property type="molecule type" value="protein"/>
</dbReference>
<dbReference type="Bgee" id="ENSG00000154645">
    <property type="expression patterns" value="Expressed in calcaneal tendon and 119 other cell types or tissues"/>
</dbReference>
<dbReference type="ExpressionAtlas" id="Q9H9P2">
    <property type="expression patterns" value="baseline and differential"/>
</dbReference>
<dbReference type="GO" id="GO:0005813">
    <property type="term" value="C:centrosome"/>
    <property type="evidence" value="ECO:0000314"/>
    <property type="project" value="HPA"/>
</dbReference>
<dbReference type="GO" id="GO:0005737">
    <property type="term" value="C:cytoplasm"/>
    <property type="evidence" value="ECO:0000314"/>
    <property type="project" value="UniProtKB"/>
</dbReference>
<dbReference type="GO" id="GO:0005829">
    <property type="term" value="C:cytosol"/>
    <property type="evidence" value="ECO:0000314"/>
    <property type="project" value="HPA"/>
</dbReference>
<dbReference type="GO" id="GO:0005789">
    <property type="term" value="C:endoplasmic reticulum membrane"/>
    <property type="evidence" value="ECO:0007669"/>
    <property type="project" value="UniProtKB-SubCell"/>
</dbReference>
<dbReference type="GO" id="GO:0048471">
    <property type="term" value="C:perinuclear region of cytoplasm"/>
    <property type="evidence" value="ECO:0000314"/>
    <property type="project" value="HGNC-UCL"/>
</dbReference>
<dbReference type="GO" id="GO:0030246">
    <property type="term" value="F:carbohydrate binding"/>
    <property type="evidence" value="ECO:0007669"/>
    <property type="project" value="UniProtKB-KW"/>
</dbReference>
<dbReference type="GO" id="GO:0007517">
    <property type="term" value="P:muscle organ development"/>
    <property type="evidence" value="ECO:0000303"/>
    <property type="project" value="HGNC-UCL"/>
</dbReference>
<dbReference type="GO" id="GO:0007399">
    <property type="term" value="P:nervous system development"/>
    <property type="evidence" value="ECO:0007669"/>
    <property type="project" value="UniProtKB-KW"/>
</dbReference>
<dbReference type="GO" id="GO:0050772">
    <property type="term" value="P:positive regulation of axonogenesis"/>
    <property type="evidence" value="ECO:0000318"/>
    <property type="project" value="GO_Central"/>
</dbReference>
<dbReference type="FunFam" id="3.10.100.10:FF:000006">
    <property type="entry name" value="Layilin b"/>
    <property type="match status" value="1"/>
</dbReference>
<dbReference type="Gene3D" id="3.10.100.10">
    <property type="entry name" value="Mannose-Binding Protein A, subunit A"/>
    <property type="match status" value="1"/>
</dbReference>
<dbReference type="InterPro" id="IPR001304">
    <property type="entry name" value="C-type_lectin-like"/>
</dbReference>
<dbReference type="InterPro" id="IPR016186">
    <property type="entry name" value="C-type_lectin-like/link_sf"/>
</dbReference>
<dbReference type="InterPro" id="IPR051505">
    <property type="entry name" value="C-type_lectin_domain"/>
</dbReference>
<dbReference type="InterPro" id="IPR016187">
    <property type="entry name" value="CTDL_fold"/>
</dbReference>
<dbReference type="PANTHER" id="PTHR14789">
    <property type="entry name" value="CHONDROLECTIN VARIANT CHODLFDELTAE"/>
    <property type="match status" value="1"/>
</dbReference>
<dbReference type="Pfam" id="PF00059">
    <property type="entry name" value="Lectin_C"/>
    <property type="match status" value="1"/>
</dbReference>
<dbReference type="SMART" id="SM00034">
    <property type="entry name" value="CLECT"/>
    <property type="match status" value="1"/>
</dbReference>
<dbReference type="SUPFAM" id="SSF56436">
    <property type="entry name" value="C-type lectin-like"/>
    <property type="match status" value="1"/>
</dbReference>
<dbReference type="PROSITE" id="PS50041">
    <property type="entry name" value="C_TYPE_LECTIN_2"/>
    <property type="match status" value="1"/>
</dbReference>